<organism>
    <name type="scientific">Pelotomaculum thermopropionicum (strain DSM 13744 / JCM 10971 / SI)</name>
    <dbReference type="NCBI Taxonomy" id="370438"/>
    <lineage>
        <taxon>Bacteria</taxon>
        <taxon>Bacillati</taxon>
        <taxon>Bacillota</taxon>
        <taxon>Clostridia</taxon>
        <taxon>Eubacteriales</taxon>
        <taxon>Desulfotomaculaceae</taxon>
        <taxon>Pelotomaculum</taxon>
    </lineage>
</organism>
<keyword id="KW-0028">Amino-acid biosynthesis</keyword>
<keyword id="KW-0963">Cytoplasm</keyword>
<keyword id="KW-0368">Histidine biosynthesis</keyword>
<keyword id="KW-0378">Hydrolase</keyword>
<keyword id="KW-0460">Magnesium</keyword>
<keyword id="KW-0479">Metal-binding</keyword>
<keyword id="KW-1185">Reference proteome</keyword>
<keyword id="KW-0862">Zinc</keyword>
<feature type="chain" id="PRO_1000084182" description="Phosphoribosyl-AMP cyclohydrolase">
    <location>
        <begin position="1"/>
        <end position="129"/>
    </location>
</feature>
<feature type="binding site" evidence="1">
    <location>
        <position position="77"/>
    </location>
    <ligand>
        <name>Mg(2+)</name>
        <dbReference type="ChEBI" id="CHEBI:18420"/>
    </ligand>
</feature>
<feature type="binding site" evidence="1">
    <location>
        <position position="78"/>
    </location>
    <ligand>
        <name>Zn(2+)</name>
        <dbReference type="ChEBI" id="CHEBI:29105"/>
        <note>ligand shared between dimeric partners</note>
    </ligand>
</feature>
<feature type="binding site" evidence="1">
    <location>
        <position position="79"/>
    </location>
    <ligand>
        <name>Mg(2+)</name>
        <dbReference type="ChEBI" id="CHEBI:18420"/>
    </ligand>
</feature>
<feature type="binding site" evidence="1">
    <location>
        <position position="81"/>
    </location>
    <ligand>
        <name>Mg(2+)</name>
        <dbReference type="ChEBI" id="CHEBI:18420"/>
    </ligand>
</feature>
<feature type="binding site" evidence="1">
    <location>
        <position position="94"/>
    </location>
    <ligand>
        <name>Zn(2+)</name>
        <dbReference type="ChEBI" id="CHEBI:29105"/>
        <note>ligand shared between dimeric partners</note>
    </ligand>
</feature>
<feature type="binding site" evidence="1">
    <location>
        <position position="101"/>
    </location>
    <ligand>
        <name>Zn(2+)</name>
        <dbReference type="ChEBI" id="CHEBI:29105"/>
        <note>ligand shared between dimeric partners</note>
    </ligand>
</feature>
<evidence type="ECO:0000255" key="1">
    <source>
        <dbReference type="HAMAP-Rule" id="MF_01021"/>
    </source>
</evidence>
<accession>A5CZ72</accession>
<reference key="1">
    <citation type="journal article" date="2008" name="Genome Res.">
        <title>The genome of Pelotomaculum thermopropionicum reveals niche-associated evolution in anaerobic microbiota.</title>
        <authorList>
            <person name="Kosaka T."/>
            <person name="Kato S."/>
            <person name="Shimoyama T."/>
            <person name="Ishii S."/>
            <person name="Abe T."/>
            <person name="Watanabe K."/>
        </authorList>
    </citation>
    <scope>NUCLEOTIDE SEQUENCE [LARGE SCALE GENOMIC DNA]</scope>
    <source>
        <strain>DSM 13744 / JCM 10971 / SI</strain>
    </source>
</reference>
<proteinExistence type="inferred from homology"/>
<dbReference type="EC" id="3.5.4.19" evidence="1"/>
<dbReference type="EMBL" id="AP009389">
    <property type="protein sequence ID" value="BAF60712.1"/>
    <property type="molecule type" value="Genomic_DNA"/>
</dbReference>
<dbReference type="SMR" id="A5CZ72"/>
<dbReference type="STRING" id="370438.PTH_2531"/>
<dbReference type="KEGG" id="pth:PTH_2531"/>
<dbReference type="eggNOG" id="COG0139">
    <property type="taxonomic scope" value="Bacteria"/>
</dbReference>
<dbReference type="HOGENOM" id="CLU_048577_5_0_9"/>
<dbReference type="UniPathway" id="UPA00031">
    <property type="reaction ID" value="UER00008"/>
</dbReference>
<dbReference type="Proteomes" id="UP000006556">
    <property type="component" value="Chromosome"/>
</dbReference>
<dbReference type="GO" id="GO:0005737">
    <property type="term" value="C:cytoplasm"/>
    <property type="evidence" value="ECO:0007669"/>
    <property type="project" value="UniProtKB-SubCell"/>
</dbReference>
<dbReference type="GO" id="GO:0000287">
    <property type="term" value="F:magnesium ion binding"/>
    <property type="evidence" value="ECO:0007669"/>
    <property type="project" value="UniProtKB-UniRule"/>
</dbReference>
<dbReference type="GO" id="GO:0004635">
    <property type="term" value="F:phosphoribosyl-AMP cyclohydrolase activity"/>
    <property type="evidence" value="ECO:0007669"/>
    <property type="project" value="UniProtKB-UniRule"/>
</dbReference>
<dbReference type="GO" id="GO:0008270">
    <property type="term" value="F:zinc ion binding"/>
    <property type="evidence" value="ECO:0007669"/>
    <property type="project" value="UniProtKB-UniRule"/>
</dbReference>
<dbReference type="GO" id="GO:0000105">
    <property type="term" value="P:L-histidine biosynthetic process"/>
    <property type="evidence" value="ECO:0007669"/>
    <property type="project" value="UniProtKB-UniRule"/>
</dbReference>
<dbReference type="FunFam" id="3.10.20.810:FF:000001">
    <property type="entry name" value="Histidine biosynthesis bifunctional protein HisIE"/>
    <property type="match status" value="1"/>
</dbReference>
<dbReference type="Gene3D" id="3.10.20.810">
    <property type="entry name" value="Phosphoribosyl-AMP cyclohydrolase"/>
    <property type="match status" value="1"/>
</dbReference>
<dbReference type="HAMAP" id="MF_01021">
    <property type="entry name" value="HisI"/>
    <property type="match status" value="1"/>
</dbReference>
<dbReference type="InterPro" id="IPR026660">
    <property type="entry name" value="PRA-CH"/>
</dbReference>
<dbReference type="InterPro" id="IPR002496">
    <property type="entry name" value="PRib_AMP_CycHydrolase_dom"/>
</dbReference>
<dbReference type="InterPro" id="IPR038019">
    <property type="entry name" value="PRib_AMP_CycHydrolase_sf"/>
</dbReference>
<dbReference type="NCBIfam" id="NF000768">
    <property type="entry name" value="PRK00051.1"/>
    <property type="match status" value="1"/>
</dbReference>
<dbReference type="PANTHER" id="PTHR42945">
    <property type="entry name" value="HISTIDINE BIOSYNTHESIS BIFUNCTIONAL PROTEIN"/>
    <property type="match status" value="1"/>
</dbReference>
<dbReference type="PANTHER" id="PTHR42945:SF1">
    <property type="entry name" value="HISTIDINE BIOSYNTHESIS BIFUNCTIONAL PROTEIN HIS7"/>
    <property type="match status" value="1"/>
</dbReference>
<dbReference type="Pfam" id="PF01502">
    <property type="entry name" value="PRA-CH"/>
    <property type="match status" value="1"/>
</dbReference>
<dbReference type="SUPFAM" id="SSF141734">
    <property type="entry name" value="HisI-like"/>
    <property type="match status" value="1"/>
</dbReference>
<name>HIS3_PELTS</name>
<comment type="function">
    <text evidence="1">Catalyzes the hydrolysis of the adenine ring of phosphoribosyl-AMP.</text>
</comment>
<comment type="catalytic activity">
    <reaction evidence="1">
        <text>1-(5-phospho-beta-D-ribosyl)-5'-AMP + H2O = 1-(5-phospho-beta-D-ribosyl)-5-[(5-phospho-beta-D-ribosylamino)methylideneamino]imidazole-4-carboxamide</text>
        <dbReference type="Rhea" id="RHEA:20049"/>
        <dbReference type="ChEBI" id="CHEBI:15377"/>
        <dbReference type="ChEBI" id="CHEBI:58435"/>
        <dbReference type="ChEBI" id="CHEBI:59457"/>
        <dbReference type="EC" id="3.5.4.19"/>
    </reaction>
</comment>
<comment type="cofactor">
    <cofactor evidence="1">
        <name>Mg(2+)</name>
        <dbReference type="ChEBI" id="CHEBI:18420"/>
    </cofactor>
    <text evidence="1">Binds 1 Mg(2+) ion per subunit.</text>
</comment>
<comment type="cofactor">
    <cofactor evidence="1">
        <name>Zn(2+)</name>
        <dbReference type="ChEBI" id="CHEBI:29105"/>
    </cofactor>
    <text evidence="1">Binds 1 zinc ion per subunit.</text>
</comment>
<comment type="pathway">
    <text evidence="1">Amino-acid biosynthesis; L-histidine biosynthesis; L-histidine from 5-phospho-alpha-D-ribose 1-diphosphate: step 3/9.</text>
</comment>
<comment type="subunit">
    <text evidence="1">Homodimer.</text>
</comment>
<comment type="subcellular location">
    <subcellularLocation>
        <location evidence="1">Cytoplasm</location>
    </subcellularLocation>
</comment>
<comment type="similarity">
    <text evidence="1">Belongs to the PRA-CH family.</text>
</comment>
<protein>
    <recommendedName>
        <fullName evidence="1">Phosphoribosyl-AMP cyclohydrolase</fullName>
        <shortName evidence="1">PRA-CH</shortName>
        <ecNumber evidence="1">3.5.4.19</ecNumber>
    </recommendedName>
</protein>
<sequence length="129" mass="14731">MPFDLDSLKYNEAGLVPAIVQDAGTGAVLMMAYMNREALEKTLATGETWFWSRSRKAFWHKGETSGNVQRVKEVLYDCDRDTLLVKVEQHGAACHEGYYSCFHYRLERDGSVTVVGEKQFDPEQVYGKR</sequence>
<gene>
    <name evidence="1" type="primary">hisI</name>
    <name type="ordered locus">PTH_2531</name>
</gene>